<comment type="function">
    <text evidence="1">Produces ATP from ADP in the presence of a proton gradient across the membrane. The gamma chain is believed to be important in regulating ATPase activity and the flow of protons through the CF(0) complex.</text>
</comment>
<comment type="subunit">
    <text evidence="1">F-type ATPases have 2 components, CF(1) - the catalytic core - and CF(0) - the membrane proton channel. CF(1) has five subunits: alpha(3), beta(3), gamma(1), delta(1), epsilon(1). CF(0) has three main subunits: a, b and c.</text>
</comment>
<comment type="subcellular location">
    <subcellularLocation>
        <location evidence="1">Cell inner membrane</location>
        <topology evidence="1">Peripheral membrane protein</topology>
    </subcellularLocation>
</comment>
<comment type="similarity">
    <text evidence="1">Belongs to the ATPase gamma chain family.</text>
</comment>
<protein>
    <recommendedName>
        <fullName evidence="1">ATP synthase gamma chain</fullName>
    </recommendedName>
    <alternativeName>
        <fullName evidence="1">ATP synthase F1 sector gamma subunit</fullName>
    </alternativeName>
    <alternativeName>
        <fullName evidence="1">F-ATPase gamma subunit</fullName>
    </alternativeName>
</protein>
<sequence length="291" mass="32210">MAGSKEIRSKIKSVENTRKITKAMEMVAASKMRKAQERMRMARPYAEKIRNVTAHLSHANSEYKHPFVVKREKVGNVGLIVVSSDKGLCGGLNTNVLRLSINQMKAWEGEGKKTIVSAIGNKGFTYLNRINADVKSHVTGLGDTPHLEKLIGTIKVMLDAYIAGEIDQLHICYTRFLNTMKQEAVIEQVLPLSDDKLETSATTAKGHWDYIYEPDANVVIDELMTRYIETIIYHAVTENMASEQSARMVAMKAASDNAKNVIGELKLVYNKARQAAITKEISEIVGGAAAV</sequence>
<keyword id="KW-0066">ATP synthesis</keyword>
<keyword id="KW-0997">Cell inner membrane</keyword>
<keyword id="KW-1003">Cell membrane</keyword>
<keyword id="KW-0139">CF(1)</keyword>
<keyword id="KW-0375">Hydrogen ion transport</keyword>
<keyword id="KW-0406">Ion transport</keyword>
<keyword id="KW-0472">Membrane</keyword>
<keyword id="KW-1185">Reference proteome</keyword>
<keyword id="KW-0813">Transport</keyword>
<accession>Q1GXM9</accession>
<evidence type="ECO:0000255" key="1">
    <source>
        <dbReference type="HAMAP-Rule" id="MF_00815"/>
    </source>
</evidence>
<proteinExistence type="inferred from homology"/>
<reference key="1">
    <citation type="submission" date="2006-03" db="EMBL/GenBank/DDBJ databases">
        <title>Complete sequence of Methylobacillus flagellatus KT.</title>
        <authorList>
            <consortium name="US DOE Joint Genome Institute"/>
            <person name="Copeland A."/>
            <person name="Lucas S."/>
            <person name="Lapidus A."/>
            <person name="Barry K."/>
            <person name="Detter J.C."/>
            <person name="Glavina del Rio T."/>
            <person name="Hammon N."/>
            <person name="Israni S."/>
            <person name="Dalin E."/>
            <person name="Tice H."/>
            <person name="Pitluck S."/>
            <person name="Brettin T."/>
            <person name="Bruce D."/>
            <person name="Han C."/>
            <person name="Tapia R."/>
            <person name="Saunders E."/>
            <person name="Gilna P."/>
            <person name="Schmutz J."/>
            <person name="Larimer F."/>
            <person name="Land M."/>
            <person name="Kyrpides N."/>
            <person name="Anderson I."/>
            <person name="Richardson P."/>
        </authorList>
    </citation>
    <scope>NUCLEOTIDE SEQUENCE [LARGE SCALE GENOMIC DNA]</scope>
    <source>
        <strain>ATCC 51484 / DSM 6875 / VKM B-1610 / KT</strain>
    </source>
</reference>
<gene>
    <name evidence="1" type="primary">atpG</name>
    <name type="ordered locus">Mfla_2745</name>
</gene>
<feature type="chain" id="PRO_1000053252" description="ATP synthase gamma chain">
    <location>
        <begin position="1"/>
        <end position="291"/>
    </location>
</feature>
<organism>
    <name type="scientific">Methylobacillus flagellatus (strain ATCC 51484 / DSM 6875 / VKM B-1610 / KT)</name>
    <dbReference type="NCBI Taxonomy" id="265072"/>
    <lineage>
        <taxon>Bacteria</taxon>
        <taxon>Pseudomonadati</taxon>
        <taxon>Pseudomonadota</taxon>
        <taxon>Betaproteobacteria</taxon>
        <taxon>Nitrosomonadales</taxon>
        <taxon>Methylophilaceae</taxon>
        <taxon>Methylobacillus</taxon>
    </lineage>
</organism>
<dbReference type="EMBL" id="CP000284">
    <property type="protein sequence ID" value="ABE51008.1"/>
    <property type="molecule type" value="Genomic_DNA"/>
</dbReference>
<dbReference type="RefSeq" id="WP_011480961.1">
    <property type="nucleotide sequence ID" value="NC_007947.1"/>
</dbReference>
<dbReference type="SMR" id="Q1GXM9"/>
<dbReference type="STRING" id="265072.Mfla_2745"/>
<dbReference type="KEGG" id="mfa:Mfla_2745"/>
<dbReference type="eggNOG" id="COG0224">
    <property type="taxonomic scope" value="Bacteria"/>
</dbReference>
<dbReference type="HOGENOM" id="CLU_050669_0_1_4"/>
<dbReference type="OrthoDB" id="9812769at2"/>
<dbReference type="Proteomes" id="UP000002440">
    <property type="component" value="Chromosome"/>
</dbReference>
<dbReference type="GO" id="GO:0005886">
    <property type="term" value="C:plasma membrane"/>
    <property type="evidence" value="ECO:0007669"/>
    <property type="project" value="UniProtKB-SubCell"/>
</dbReference>
<dbReference type="GO" id="GO:0045259">
    <property type="term" value="C:proton-transporting ATP synthase complex"/>
    <property type="evidence" value="ECO:0007669"/>
    <property type="project" value="UniProtKB-KW"/>
</dbReference>
<dbReference type="GO" id="GO:0005524">
    <property type="term" value="F:ATP binding"/>
    <property type="evidence" value="ECO:0007669"/>
    <property type="project" value="UniProtKB-UniRule"/>
</dbReference>
<dbReference type="GO" id="GO:0046933">
    <property type="term" value="F:proton-transporting ATP synthase activity, rotational mechanism"/>
    <property type="evidence" value="ECO:0007669"/>
    <property type="project" value="UniProtKB-UniRule"/>
</dbReference>
<dbReference type="GO" id="GO:0042777">
    <property type="term" value="P:proton motive force-driven plasma membrane ATP synthesis"/>
    <property type="evidence" value="ECO:0007669"/>
    <property type="project" value="UniProtKB-UniRule"/>
</dbReference>
<dbReference type="CDD" id="cd12151">
    <property type="entry name" value="F1-ATPase_gamma"/>
    <property type="match status" value="1"/>
</dbReference>
<dbReference type="FunFam" id="1.10.287.80:FF:000005">
    <property type="entry name" value="ATP synthase gamma chain"/>
    <property type="match status" value="1"/>
</dbReference>
<dbReference type="Gene3D" id="3.40.1380.10">
    <property type="match status" value="1"/>
</dbReference>
<dbReference type="Gene3D" id="1.10.287.80">
    <property type="entry name" value="ATP synthase, gamma subunit, helix hairpin domain"/>
    <property type="match status" value="1"/>
</dbReference>
<dbReference type="HAMAP" id="MF_00815">
    <property type="entry name" value="ATP_synth_gamma_bact"/>
    <property type="match status" value="1"/>
</dbReference>
<dbReference type="InterPro" id="IPR035968">
    <property type="entry name" value="ATP_synth_F1_ATPase_gsu"/>
</dbReference>
<dbReference type="InterPro" id="IPR000131">
    <property type="entry name" value="ATP_synth_F1_gsu"/>
</dbReference>
<dbReference type="InterPro" id="IPR023632">
    <property type="entry name" value="ATP_synth_F1_gsu_CS"/>
</dbReference>
<dbReference type="NCBIfam" id="TIGR01146">
    <property type="entry name" value="ATPsyn_F1gamma"/>
    <property type="match status" value="1"/>
</dbReference>
<dbReference type="NCBIfam" id="NF004144">
    <property type="entry name" value="PRK05621.1-1"/>
    <property type="match status" value="1"/>
</dbReference>
<dbReference type="PANTHER" id="PTHR11693">
    <property type="entry name" value="ATP SYNTHASE GAMMA CHAIN"/>
    <property type="match status" value="1"/>
</dbReference>
<dbReference type="PANTHER" id="PTHR11693:SF22">
    <property type="entry name" value="ATP SYNTHASE SUBUNIT GAMMA, MITOCHONDRIAL"/>
    <property type="match status" value="1"/>
</dbReference>
<dbReference type="Pfam" id="PF00231">
    <property type="entry name" value="ATP-synt"/>
    <property type="match status" value="1"/>
</dbReference>
<dbReference type="PRINTS" id="PR00126">
    <property type="entry name" value="ATPASEGAMMA"/>
</dbReference>
<dbReference type="SUPFAM" id="SSF52943">
    <property type="entry name" value="ATP synthase (F1-ATPase), gamma subunit"/>
    <property type="match status" value="1"/>
</dbReference>
<dbReference type="PROSITE" id="PS00153">
    <property type="entry name" value="ATPASE_GAMMA"/>
    <property type="match status" value="1"/>
</dbReference>
<name>ATPG_METFK</name>